<accession>Q0I1T9</accession>
<comment type="function">
    <text evidence="1">Together with LptE, is involved in the assembly of lipopolysaccharide (LPS) at the surface of the outer membrane.</text>
</comment>
<comment type="subunit">
    <text evidence="1">Component of the lipopolysaccharide transport and assembly complex. Interacts with LptE and LptA.</text>
</comment>
<comment type="subcellular location">
    <subcellularLocation>
        <location evidence="1">Cell outer membrane</location>
    </subcellularLocation>
</comment>
<comment type="similarity">
    <text evidence="1">Belongs to the LptD family.</text>
</comment>
<organism>
    <name type="scientific">Histophilus somni (strain 129Pt)</name>
    <name type="common">Haemophilus somnus</name>
    <dbReference type="NCBI Taxonomy" id="205914"/>
    <lineage>
        <taxon>Bacteria</taxon>
        <taxon>Pseudomonadati</taxon>
        <taxon>Pseudomonadota</taxon>
        <taxon>Gammaproteobacteria</taxon>
        <taxon>Pasteurellales</taxon>
        <taxon>Pasteurellaceae</taxon>
        <taxon>Histophilus</taxon>
    </lineage>
</organism>
<reference key="1">
    <citation type="journal article" date="2007" name="J. Bacteriol.">
        <title>Complete genome sequence of Haemophilus somnus (Histophilus somni) strain 129Pt and comparison to Haemophilus ducreyi 35000HP and Haemophilus influenzae Rd.</title>
        <authorList>
            <person name="Challacombe J.F."/>
            <person name="Duncan A.J."/>
            <person name="Brettin T.S."/>
            <person name="Bruce D."/>
            <person name="Chertkov O."/>
            <person name="Detter J.C."/>
            <person name="Han C.S."/>
            <person name="Misra M."/>
            <person name="Richardson P."/>
            <person name="Tapia R."/>
            <person name="Thayer N."/>
            <person name="Xie G."/>
            <person name="Inzana T.J."/>
        </authorList>
    </citation>
    <scope>NUCLEOTIDE SEQUENCE [LARGE SCALE GENOMIC DNA]</scope>
    <source>
        <strain>129Pt</strain>
    </source>
</reference>
<feature type="signal peptide" evidence="1">
    <location>
        <begin position="1"/>
        <end position="24"/>
    </location>
</feature>
<feature type="chain" id="PRO_0000281610" description="LPS-assembly protein LptD">
    <location>
        <begin position="25"/>
        <end position="781"/>
    </location>
</feature>
<gene>
    <name evidence="1" type="primary">lptD</name>
    <name type="synonym">imp</name>
    <name type="synonym">ostA</name>
    <name type="ordered locus">HS_0205</name>
</gene>
<name>LPTD_HISS1</name>
<evidence type="ECO:0000255" key="1">
    <source>
        <dbReference type="HAMAP-Rule" id="MF_01411"/>
    </source>
</evidence>
<dbReference type="EMBL" id="CP000436">
    <property type="protein sequence ID" value="ABI24483.1"/>
    <property type="molecule type" value="Genomic_DNA"/>
</dbReference>
<dbReference type="SMR" id="Q0I1T9"/>
<dbReference type="KEGG" id="hso:HS_0205"/>
<dbReference type="eggNOG" id="COG1452">
    <property type="taxonomic scope" value="Bacteria"/>
</dbReference>
<dbReference type="HOGENOM" id="CLU_009039_2_0_6"/>
<dbReference type="GO" id="GO:0009279">
    <property type="term" value="C:cell outer membrane"/>
    <property type="evidence" value="ECO:0007669"/>
    <property type="project" value="UniProtKB-SubCell"/>
</dbReference>
<dbReference type="GO" id="GO:1990351">
    <property type="term" value="C:transporter complex"/>
    <property type="evidence" value="ECO:0007669"/>
    <property type="project" value="TreeGrafter"/>
</dbReference>
<dbReference type="GO" id="GO:0043165">
    <property type="term" value="P:Gram-negative-bacterium-type cell outer membrane assembly"/>
    <property type="evidence" value="ECO:0007669"/>
    <property type="project" value="UniProtKB-UniRule"/>
</dbReference>
<dbReference type="GO" id="GO:0015920">
    <property type="term" value="P:lipopolysaccharide transport"/>
    <property type="evidence" value="ECO:0007669"/>
    <property type="project" value="InterPro"/>
</dbReference>
<dbReference type="Gene3D" id="2.60.450.10">
    <property type="entry name" value="Lipopolysaccharide (LPS) transport protein A like domain"/>
    <property type="match status" value="1"/>
</dbReference>
<dbReference type="HAMAP" id="MF_01411">
    <property type="entry name" value="LPS_assembly_LptD"/>
    <property type="match status" value="1"/>
</dbReference>
<dbReference type="InterPro" id="IPR020889">
    <property type="entry name" value="LipoPS_assembly_LptD"/>
</dbReference>
<dbReference type="InterPro" id="IPR050218">
    <property type="entry name" value="LptD"/>
</dbReference>
<dbReference type="InterPro" id="IPR007543">
    <property type="entry name" value="LptD_C"/>
</dbReference>
<dbReference type="InterPro" id="IPR005653">
    <property type="entry name" value="OstA-like_N"/>
</dbReference>
<dbReference type="NCBIfam" id="NF002997">
    <property type="entry name" value="PRK03761.1"/>
    <property type="match status" value="1"/>
</dbReference>
<dbReference type="PANTHER" id="PTHR30189">
    <property type="entry name" value="LPS-ASSEMBLY PROTEIN"/>
    <property type="match status" value="1"/>
</dbReference>
<dbReference type="PANTHER" id="PTHR30189:SF1">
    <property type="entry name" value="LPS-ASSEMBLY PROTEIN LPTD"/>
    <property type="match status" value="1"/>
</dbReference>
<dbReference type="Pfam" id="PF04453">
    <property type="entry name" value="LptD"/>
    <property type="match status" value="1"/>
</dbReference>
<dbReference type="Pfam" id="PF03968">
    <property type="entry name" value="LptD_N"/>
    <property type="match status" value="1"/>
</dbReference>
<keyword id="KW-0998">Cell outer membrane</keyword>
<keyword id="KW-0472">Membrane</keyword>
<keyword id="KW-0732">Signal</keyword>
<sequence>MKKNYYTVLSLSILTALYSTSSQANLQQQCLIGVPHFQGEIVQGDPNELPVYIEADHAKMNQSTHAQYEGNVNVKQGNRHLTAGMIEIEQHGKDNAKRYAYAKNGFDYKDNLIQLNGDNAKIHLDSKDANIQDADYQLVGRQGRGTADEVELREHYRVMKNATFTSCLPNSDAWSIEAKEMRQHIQEEYAEMWHARFKVSGIPIFYTPYLQLPIGDRRRSGLLIPKAGISTRHGYWYAQPFYWNIAPNFDATFTPKYMSHRGWQLNAETRYLTRIGEGKFVVEYLKTDRHSDSLNTARSRHLFYWGHNSHFLKDWRLNVNYTKVSDKHYFNDFESEYGNSTDGYVDQQASISYYQPNYNLSISAKQFQIFDKVDIGPYRALPQIDFNYYRNEIANGLVDFSLFSQVVRFDNDSALMPTAWRFHIEPSLTFPLSNRYGSLNIETKLYATRYLQKRGKGENAEEIKKTVNRVLPQIKLDFQTVLANRQSFIEGYTQTLEPKFQYLYRPYKDQSDIGLKQQNNDYLGFGYDSTLLQQDYFSLFRDRRYSGLDRIVSANQITLGGTTRFYDKNANERFNLSIGQIYYLKDSRTDNNPQNMAQGRSSSWSLESNWRINSKWNWRGSYQYDTHLNQTSLANTVLEYNSEKNNLIQLSYRYVNQSYIDQNLIGKNTYGQSIKQLGMTTAWELTDHWTLVGRYYQDLALKKPVEQYLGIQYNSCCWSIGVGARRYVTNRANQRNDEVLYDNSLSLTFELRGLSPSDHKNNIDEMLKKGKLPYIKAFSLY</sequence>
<protein>
    <recommendedName>
        <fullName evidence="1">LPS-assembly protein LptD</fullName>
    </recommendedName>
</protein>
<proteinExistence type="inferred from homology"/>